<accession>Q7U733</accession>
<gene>
    <name evidence="1" type="primary">hslO</name>
    <name type="ordered locus">SYNW1153</name>
</gene>
<organism>
    <name type="scientific">Parasynechococcus marenigrum (strain WH8102)</name>
    <dbReference type="NCBI Taxonomy" id="84588"/>
    <lineage>
        <taxon>Bacteria</taxon>
        <taxon>Bacillati</taxon>
        <taxon>Cyanobacteriota</taxon>
        <taxon>Cyanophyceae</taxon>
        <taxon>Synechococcales</taxon>
        <taxon>Prochlorococcaceae</taxon>
        <taxon>Parasynechococcus</taxon>
        <taxon>Parasynechococcus marenigrum</taxon>
    </lineage>
</organism>
<feature type="chain" id="PRO_0000192218" description="33 kDa chaperonin">
    <location>
        <begin position="1"/>
        <end position="305"/>
    </location>
</feature>
<feature type="disulfide bond" description="Redox-active" evidence="1">
    <location>
        <begin position="247"/>
        <end position="249"/>
    </location>
</feature>
<feature type="disulfide bond" description="Redox-active" evidence="1">
    <location>
        <begin position="280"/>
        <end position="283"/>
    </location>
</feature>
<sequence>MADRLVRATAAGGGIRLVAVSTTETVREARRRHDLSFLSTVMLGRAMAAGLMLASSMKVRHGRVNLRLGSDGPLRGLMVDAGRDGTVRGYVGDNTLELDPVIDADGNHSFNFKAAAGTGYLHVMRDDGKGEPFNSTVELVSGGIGDDVASYLLHSEQTPSAVFVGERISSQQLHSSGGLLVQILPKAAEEPALVELLDQRCREIEDFSGRLDRCGDQLEDLLVDVFPDLDPRPLEDADASQSVNFHCRCTRERSVAALLLMGRTELADMLEKDGGAELNCHFCSNNYVVSGPELEGLIAELAAAS</sequence>
<keyword id="KW-0143">Chaperone</keyword>
<keyword id="KW-0963">Cytoplasm</keyword>
<keyword id="KW-1015">Disulfide bond</keyword>
<keyword id="KW-0676">Redox-active center</keyword>
<keyword id="KW-0862">Zinc</keyword>
<name>HSLO_PARMW</name>
<proteinExistence type="inferred from homology"/>
<comment type="function">
    <text evidence="1">Redox regulated molecular chaperone. Protects both thermally unfolding and oxidatively damaged proteins from irreversible aggregation. Plays an important role in the bacterial defense system toward oxidative stress.</text>
</comment>
<comment type="subcellular location">
    <subcellularLocation>
        <location evidence="1">Cytoplasm</location>
    </subcellularLocation>
</comment>
<comment type="PTM">
    <text evidence="1">Under oxidizing conditions two disulfide bonds are formed involving the reactive cysteines. Under reducing conditions zinc is bound to the reactive cysteines and the protein is inactive.</text>
</comment>
<comment type="similarity">
    <text evidence="1">Belongs to the HSP33 family.</text>
</comment>
<evidence type="ECO:0000255" key="1">
    <source>
        <dbReference type="HAMAP-Rule" id="MF_00117"/>
    </source>
</evidence>
<protein>
    <recommendedName>
        <fullName evidence="1">33 kDa chaperonin</fullName>
    </recommendedName>
    <alternativeName>
        <fullName evidence="1">Heat shock protein 33 homolog</fullName>
        <shortName evidence="1">HSP33</shortName>
    </alternativeName>
</protein>
<dbReference type="EMBL" id="BX569692">
    <property type="protein sequence ID" value="CAE07668.1"/>
    <property type="molecule type" value="Genomic_DNA"/>
</dbReference>
<dbReference type="RefSeq" id="WP_011128018.1">
    <property type="nucleotide sequence ID" value="NC_005070.1"/>
</dbReference>
<dbReference type="SMR" id="Q7U733"/>
<dbReference type="STRING" id="84588.SYNW1153"/>
<dbReference type="KEGG" id="syw:SYNW1153"/>
<dbReference type="eggNOG" id="COG1281">
    <property type="taxonomic scope" value="Bacteria"/>
</dbReference>
<dbReference type="HOGENOM" id="CLU_054493_1_0_3"/>
<dbReference type="Proteomes" id="UP000001422">
    <property type="component" value="Chromosome"/>
</dbReference>
<dbReference type="GO" id="GO:0005737">
    <property type="term" value="C:cytoplasm"/>
    <property type="evidence" value="ECO:0007669"/>
    <property type="project" value="UniProtKB-SubCell"/>
</dbReference>
<dbReference type="GO" id="GO:0044183">
    <property type="term" value="F:protein folding chaperone"/>
    <property type="evidence" value="ECO:0007669"/>
    <property type="project" value="TreeGrafter"/>
</dbReference>
<dbReference type="GO" id="GO:0051082">
    <property type="term" value="F:unfolded protein binding"/>
    <property type="evidence" value="ECO:0007669"/>
    <property type="project" value="UniProtKB-UniRule"/>
</dbReference>
<dbReference type="GO" id="GO:0042026">
    <property type="term" value="P:protein refolding"/>
    <property type="evidence" value="ECO:0007669"/>
    <property type="project" value="TreeGrafter"/>
</dbReference>
<dbReference type="CDD" id="cd00498">
    <property type="entry name" value="Hsp33"/>
    <property type="match status" value="1"/>
</dbReference>
<dbReference type="Gene3D" id="3.55.30.10">
    <property type="entry name" value="Hsp33 domain"/>
    <property type="match status" value="1"/>
</dbReference>
<dbReference type="Gene3D" id="3.90.1280.10">
    <property type="entry name" value="HSP33 redox switch-like"/>
    <property type="match status" value="1"/>
</dbReference>
<dbReference type="HAMAP" id="MF_00117">
    <property type="entry name" value="HslO"/>
    <property type="match status" value="1"/>
</dbReference>
<dbReference type="InterPro" id="IPR000397">
    <property type="entry name" value="Heat_shock_Hsp33"/>
</dbReference>
<dbReference type="InterPro" id="IPR016154">
    <property type="entry name" value="Heat_shock_Hsp33_C"/>
</dbReference>
<dbReference type="InterPro" id="IPR016153">
    <property type="entry name" value="Heat_shock_Hsp33_N"/>
</dbReference>
<dbReference type="NCBIfam" id="NF001033">
    <property type="entry name" value="PRK00114.1"/>
    <property type="match status" value="1"/>
</dbReference>
<dbReference type="PANTHER" id="PTHR30111">
    <property type="entry name" value="33 KDA CHAPERONIN"/>
    <property type="match status" value="1"/>
</dbReference>
<dbReference type="PANTHER" id="PTHR30111:SF1">
    <property type="entry name" value="33 KDA CHAPERONIN"/>
    <property type="match status" value="1"/>
</dbReference>
<dbReference type="Pfam" id="PF01430">
    <property type="entry name" value="HSP33"/>
    <property type="match status" value="1"/>
</dbReference>
<dbReference type="PIRSF" id="PIRSF005261">
    <property type="entry name" value="Heat_shock_Hsp33"/>
    <property type="match status" value="1"/>
</dbReference>
<dbReference type="SUPFAM" id="SSF64397">
    <property type="entry name" value="Hsp33 domain"/>
    <property type="match status" value="1"/>
</dbReference>
<dbReference type="SUPFAM" id="SSF118352">
    <property type="entry name" value="HSP33 redox switch-like"/>
    <property type="match status" value="1"/>
</dbReference>
<reference key="1">
    <citation type="journal article" date="2003" name="Nature">
        <title>The genome of a motile marine Synechococcus.</title>
        <authorList>
            <person name="Palenik B."/>
            <person name="Brahamsha B."/>
            <person name="Larimer F.W."/>
            <person name="Land M.L."/>
            <person name="Hauser L."/>
            <person name="Chain P."/>
            <person name="Lamerdin J.E."/>
            <person name="Regala W."/>
            <person name="Allen E.E."/>
            <person name="McCarren J."/>
            <person name="Paulsen I.T."/>
            <person name="Dufresne A."/>
            <person name="Partensky F."/>
            <person name="Webb E.A."/>
            <person name="Waterbury J."/>
        </authorList>
    </citation>
    <scope>NUCLEOTIDE SEQUENCE [LARGE SCALE GENOMIC DNA]</scope>
    <source>
        <strain>WH8102</strain>
    </source>
</reference>